<feature type="chain" id="PRO_0000100730" description="POU domain, class 3, transcription factor 3">
    <location>
        <begin position="1"/>
        <end position="497"/>
    </location>
</feature>
<feature type="domain" description="POU-specific" evidence="4">
    <location>
        <begin position="311"/>
        <end position="385"/>
    </location>
</feature>
<feature type="DNA-binding region" description="Homeobox" evidence="3">
    <location>
        <begin position="403"/>
        <end position="462"/>
    </location>
</feature>
<feature type="region of interest" description="Disordered" evidence="5">
    <location>
        <begin position="31"/>
        <end position="62"/>
    </location>
</feature>
<feature type="region of interest" description="Disordered" evidence="5">
    <location>
        <begin position="121"/>
        <end position="189"/>
    </location>
</feature>
<feature type="region of interest" description="Disordered" evidence="5">
    <location>
        <begin position="230"/>
        <end position="316"/>
    </location>
</feature>
<feature type="region of interest" description="Disordered" evidence="5">
    <location>
        <begin position="458"/>
        <end position="497"/>
    </location>
</feature>
<feature type="compositionally biased region" description="Gly residues" evidence="5">
    <location>
        <begin position="31"/>
        <end position="51"/>
    </location>
</feature>
<feature type="compositionally biased region" description="Pro residues" evidence="5">
    <location>
        <begin position="133"/>
        <end position="145"/>
    </location>
</feature>
<feature type="compositionally biased region" description="Pro residues" evidence="5">
    <location>
        <begin position="170"/>
        <end position="180"/>
    </location>
</feature>
<feature type="compositionally biased region" description="Gly residues" evidence="5">
    <location>
        <begin position="240"/>
        <end position="250"/>
    </location>
</feature>
<feature type="compositionally biased region" description="Basic residues" evidence="5">
    <location>
        <begin position="269"/>
        <end position="286"/>
    </location>
</feature>
<feature type="compositionally biased region" description="Polar residues" evidence="5">
    <location>
        <begin position="465"/>
        <end position="483"/>
    </location>
</feature>
<feature type="mutagenesis site" description="Abolishes synergistic action with SOX11." evidence="6">
    <original>WF</original>
    <variation>CS</variation>
    <location>
        <begin position="450"/>
        <end position="451"/>
    </location>
</feature>
<evidence type="ECO:0000250" key="1">
    <source>
        <dbReference type="UniProtKB" id="P20264"/>
    </source>
</evidence>
<evidence type="ECO:0000250" key="2">
    <source>
        <dbReference type="UniProtKB" id="P31361"/>
    </source>
</evidence>
<evidence type="ECO:0000255" key="3">
    <source>
        <dbReference type="PROSITE-ProRule" id="PRU00108"/>
    </source>
</evidence>
<evidence type="ECO:0000255" key="4">
    <source>
        <dbReference type="PROSITE-ProRule" id="PRU00530"/>
    </source>
</evidence>
<evidence type="ECO:0000256" key="5">
    <source>
        <dbReference type="SAM" id="MobiDB-lite"/>
    </source>
</evidence>
<evidence type="ECO:0000269" key="6">
    <source>
    </source>
</evidence>
<evidence type="ECO:0000305" key="7"/>
<name>PO3F3_RAT</name>
<proteinExistence type="evidence at protein level"/>
<dbReference type="EMBL" id="AJ001641">
    <property type="protein sequence ID" value="CAA04893.1"/>
    <property type="molecule type" value="mRNA"/>
</dbReference>
<dbReference type="EMBL" id="M84644">
    <property type="protein sequence ID" value="AAA42041.1"/>
    <property type="molecule type" value="mRNA"/>
</dbReference>
<dbReference type="RefSeq" id="NP_620192.1">
    <property type="nucleotide sequence ID" value="NM_138837.1"/>
</dbReference>
<dbReference type="SMR" id="Q63262"/>
<dbReference type="FunCoup" id="Q63262">
    <property type="interactions" value="397"/>
</dbReference>
<dbReference type="STRING" id="10116.ENSRNOP00000073663"/>
<dbReference type="iPTMnet" id="Q63262"/>
<dbReference type="PhosphoSitePlus" id="Q63262"/>
<dbReference type="PaxDb" id="10116-ENSRNOP00000040234"/>
<dbReference type="GeneID" id="192109"/>
<dbReference type="KEGG" id="rno:192109"/>
<dbReference type="UCSC" id="RGD:619768">
    <property type="organism name" value="rat"/>
</dbReference>
<dbReference type="AGR" id="RGD:619768"/>
<dbReference type="CTD" id="5455"/>
<dbReference type="RGD" id="619768">
    <property type="gene designation" value="Pou3f3"/>
</dbReference>
<dbReference type="eggNOG" id="KOG3802">
    <property type="taxonomic scope" value="Eukaryota"/>
</dbReference>
<dbReference type="InParanoid" id="Q63262"/>
<dbReference type="PhylomeDB" id="Q63262"/>
<dbReference type="PRO" id="PR:Q63262"/>
<dbReference type="Proteomes" id="UP000002494">
    <property type="component" value="Unplaced"/>
</dbReference>
<dbReference type="GO" id="GO:0005634">
    <property type="term" value="C:nucleus"/>
    <property type="evidence" value="ECO:0000314"/>
    <property type="project" value="MGI"/>
</dbReference>
<dbReference type="GO" id="GO:0003677">
    <property type="term" value="F:DNA binding"/>
    <property type="evidence" value="ECO:0000266"/>
    <property type="project" value="RGD"/>
</dbReference>
<dbReference type="GO" id="GO:0003700">
    <property type="term" value="F:DNA-binding transcription factor activity"/>
    <property type="evidence" value="ECO:0000314"/>
    <property type="project" value="RGD"/>
</dbReference>
<dbReference type="GO" id="GO:0000981">
    <property type="term" value="F:DNA-binding transcription factor activity, RNA polymerase II-specific"/>
    <property type="evidence" value="ECO:0000314"/>
    <property type="project" value="MGI"/>
</dbReference>
<dbReference type="GO" id="GO:0071837">
    <property type="term" value="F:HMG box domain binding"/>
    <property type="evidence" value="ECO:0000266"/>
    <property type="project" value="RGD"/>
</dbReference>
<dbReference type="GO" id="GO:0042803">
    <property type="term" value="F:protein homodimerization activity"/>
    <property type="evidence" value="ECO:0000250"/>
    <property type="project" value="UniProtKB"/>
</dbReference>
<dbReference type="GO" id="GO:0000978">
    <property type="term" value="F:RNA polymerase II cis-regulatory region sequence-specific DNA binding"/>
    <property type="evidence" value="ECO:0000318"/>
    <property type="project" value="GO_Central"/>
</dbReference>
<dbReference type="GO" id="GO:0043565">
    <property type="term" value="F:sequence-specific DNA binding"/>
    <property type="evidence" value="ECO:0000250"/>
    <property type="project" value="UniProtKB"/>
</dbReference>
<dbReference type="GO" id="GO:0021799">
    <property type="term" value="P:cerebral cortex radially oriented cell migration"/>
    <property type="evidence" value="ECO:0000266"/>
    <property type="project" value="RGD"/>
</dbReference>
<dbReference type="GO" id="GO:0048878">
    <property type="term" value="P:chemical homeostasis"/>
    <property type="evidence" value="ECO:0000266"/>
    <property type="project" value="RGD"/>
</dbReference>
<dbReference type="GO" id="GO:0021869">
    <property type="term" value="P:forebrain ventricular zone progenitor cell division"/>
    <property type="evidence" value="ECO:0000266"/>
    <property type="project" value="RGD"/>
</dbReference>
<dbReference type="GO" id="GO:0001822">
    <property type="term" value="P:kidney development"/>
    <property type="evidence" value="ECO:0000266"/>
    <property type="project" value="RGD"/>
</dbReference>
<dbReference type="GO" id="GO:0072218">
    <property type="term" value="P:metanephric ascending thin limb development"/>
    <property type="evidence" value="ECO:0000250"/>
    <property type="project" value="UniProtKB"/>
</dbReference>
<dbReference type="GO" id="GO:0072240">
    <property type="term" value="P:metanephric DCT cell differentiation"/>
    <property type="evidence" value="ECO:0000250"/>
    <property type="project" value="UniProtKB"/>
</dbReference>
<dbReference type="GO" id="GO:0072236">
    <property type="term" value="P:metanephric loop of Henle development"/>
    <property type="evidence" value="ECO:0000250"/>
    <property type="project" value="UniProtKB"/>
</dbReference>
<dbReference type="GO" id="GO:0072227">
    <property type="term" value="P:metanephric macula densa development"/>
    <property type="evidence" value="ECO:0000250"/>
    <property type="project" value="UniProtKB"/>
</dbReference>
<dbReference type="GO" id="GO:0072233">
    <property type="term" value="P:metanephric thick ascending limb development"/>
    <property type="evidence" value="ECO:0000250"/>
    <property type="project" value="UniProtKB"/>
</dbReference>
<dbReference type="GO" id="GO:0043066">
    <property type="term" value="P:negative regulation of apoptotic process"/>
    <property type="evidence" value="ECO:0000250"/>
    <property type="project" value="UniProtKB"/>
</dbReference>
<dbReference type="GO" id="GO:0045892">
    <property type="term" value="P:negative regulation of DNA-templated transcription"/>
    <property type="evidence" value="ECO:0000250"/>
    <property type="project" value="UniProtKB"/>
</dbReference>
<dbReference type="GO" id="GO:0000122">
    <property type="term" value="P:negative regulation of transcription by RNA polymerase II"/>
    <property type="evidence" value="ECO:0000316"/>
    <property type="project" value="MGI"/>
</dbReference>
<dbReference type="GO" id="GO:0008284">
    <property type="term" value="P:positive regulation of cell population proliferation"/>
    <property type="evidence" value="ECO:0000250"/>
    <property type="project" value="UniProtKB"/>
</dbReference>
<dbReference type="GO" id="GO:0045893">
    <property type="term" value="P:positive regulation of DNA-templated transcription"/>
    <property type="evidence" value="ECO:0000315"/>
    <property type="project" value="UniProtKB"/>
</dbReference>
<dbReference type="GO" id="GO:0010628">
    <property type="term" value="P:positive regulation of gene expression"/>
    <property type="evidence" value="ECO:0000315"/>
    <property type="project" value="UniProtKB"/>
</dbReference>
<dbReference type="GO" id="GO:0045944">
    <property type="term" value="P:positive regulation of transcription by RNA polymerase II"/>
    <property type="evidence" value="ECO:0000314"/>
    <property type="project" value="RGD"/>
</dbReference>
<dbReference type="GO" id="GO:0006357">
    <property type="term" value="P:regulation of transcription by RNA polymerase II"/>
    <property type="evidence" value="ECO:0000318"/>
    <property type="project" value="GO_Central"/>
</dbReference>
<dbReference type="GO" id="GO:0071918">
    <property type="term" value="P:urea transmembrane transport"/>
    <property type="evidence" value="ECO:0000266"/>
    <property type="project" value="RGD"/>
</dbReference>
<dbReference type="CDD" id="cd00086">
    <property type="entry name" value="homeodomain"/>
    <property type="match status" value="1"/>
</dbReference>
<dbReference type="FunFam" id="1.10.10.60:FF:000005">
    <property type="entry name" value="POU domain protein"/>
    <property type="match status" value="1"/>
</dbReference>
<dbReference type="FunFam" id="1.10.260.40:FF:000001">
    <property type="entry name" value="POU domain protein"/>
    <property type="match status" value="1"/>
</dbReference>
<dbReference type="Gene3D" id="1.10.10.60">
    <property type="entry name" value="Homeodomain-like"/>
    <property type="match status" value="1"/>
</dbReference>
<dbReference type="Gene3D" id="1.10.260.40">
    <property type="entry name" value="lambda repressor-like DNA-binding domains"/>
    <property type="match status" value="1"/>
</dbReference>
<dbReference type="InterPro" id="IPR001356">
    <property type="entry name" value="HD"/>
</dbReference>
<dbReference type="InterPro" id="IPR017970">
    <property type="entry name" value="Homeobox_CS"/>
</dbReference>
<dbReference type="InterPro" id="IPR009057">
    <property type="entry name" value="Homeodomain-like_sf"/>
</dbReference>
<dbReference type="InterPro" id="IPR010982">
    <property type="entry name" value="Lambda_DNA-bd_dom_sf"/>
</dbReference>
<dbReference type="InterPro" id="IPR013847">
    <property type="entry name" value="POU"/>
</dbReference>
<dbReference type="InterPro" id="IPR000327">
    <property type="entry name" value="POU_dom"/>
</dbReference>
<dbReference type="InterPro" id="IPR050255">
    <property type="entry name" value="POU_domain_TF"/>
</dbReference>
<dbReference type="InterPro" id="IPR016362">
    <property type="entry name" value="TF_POU_3"/>
</dbReference>
<dbReference type="PANTHER" id="PTHR11636">
    <property type="entry name" value="POU DOMAIN"/>
    <property type="match status" value="1"/>
</dbReference>
<dbReference type="PANTHER" id="PTHR11636:SF125">
    <property type="entry name" value="POU DOMAIN, CLASS 3, TRANSCRIPTION FACTOR 3"/>
    <property type="match status" value="1"/>
</dbReference>
<dbReference type="Pfam" id="PF00046">
    <property type="entry name" value="Homeodomain"/>
    <property type="match status" value="1"/>
</dbReference>
<dbReference type="Pfam" id="PF00157">
    <property type="entry name" value="Pou"/>
    <property type="match status" value="1"/>
</dbReference>
<dbReference type="PIRSF" id="PIRSF002629">
    <property type="entry name" value="Transcription_factor_POU"/>
    <property type="match status" value="1"/>
</dbReference>
<dbReference type="PRINTS" id="PR00028">
    <property type="entry name" value="POUDOMAIN"/>
</dbReference>
<dbReference type="SMART" id="SM00389">
    <property type="entry name" value="HOX"/>
    <property type="match status" value="1"/>
</dbReference>
<dbReference type="SMART" id="SM00352">
    <property type="entry name" value="POU"/>
    <property type="match status" value="1"/>
</dbReference>
<dbReference type="SUPFAM" id="SSF46689">
    <property type="entry name" value="Homeodomain-like"/>
    <property type="match status" value="1"/>
</dbReference>
<dbReference type="SUPFAM" id="SSF47413">
    <property type="entry name" value="lambda repressor-like DNA-binding domains"/>
    <property type="match status" value="1"/>
</dbReference>
<dbReference type="PROSITE" id="PS00027">
    <property type="entry name" value="HOMEOBOX_1"/>
    <property type="match status" value="1"/>
</dbReference>
<dbReference type="PROSITE" id="PS50071">
    <property type="entry name" value="HOMEOBOX_2"/>
    <property type="match status" value="1"/>
</dbReference>
<dbReference type="PROSITE" id="PS00035">
    <property type="entry name" value="POU_1"/>
    <property type="match status" value="1"/>
</dbReference>
<dbReference type="PROSITE" id="PS00465">
    <property type="entry name" value="POU_2"/>
    <property type="match status" value="1"/>
</dbReference>
<dbReference type="PROSITE" id="PS51179">
    <property type="entry name" value="POU_3"/>
    <property type="match status" value="1"/>
</dbReference>
<organism>
    <name type="scientific">Rattus norvegicus</name>
    <name type="common">Rat</name>
    <dbReference type="NCBI Taxonomy" id="10116"/>
    <lineage>
        <taxon>Eukaryota</taxon>
        <taxon>Metazoa</taxon>
        <taxon>Chordata</taxon>
        <taxon>Craniata</taxon>
        <taxon>Vertebrata</taxon>
        <taxon>Euteleostomi</taxon>
        <taxon>Mammalia</taxon>
        <taxon>Eutheria</taxon>
        <taxon>Euarchontoglires</taxon>
        <taxon>Glires</taxon>
        <taxon>Rodentia</taxon>
        <taxon>Myomorpha</taxon>
        <taxon>Muroidea</taxon>
        <taxon>Muridae</taxon>
        <taxon>Murinae</taxon>
        <taxon>Rattus</taxon>
    </lineage>
</organism>
<sequence length="497" mass="50226">MATAASNPYLPGNSLLAAGSIVHSDAAGAGGGGGGGGGGGGGAGGGGGGMQPGSAAVTSGAYRGDPSSVKMVQSDFMQGAMAASNGGHMLSHAHQWVTALPHAAAAAAAAAAAAVEASSPWSGSAVGMAGSPQQPPRPPPPPPQGPDVKGGVGREDLHAGTALHHRGPPHLGPPPPPPHQGHPGGWGAAAAAAAAAAAAAAAAHLPSMAGGQQPPPQSLLYSQPGGFTVNGMLSAPPGPGGGGGGAGGGAQSLVHPGLVRGDTPELAEHHHHHHHHAHPHPPHPHHAQGPPHHGGGGAGPGLNSHDPHSDEDTPTSDDLEQFAKQFKQRRIKLGFTQADVGLALGTLYGNVFSQTTICRFEALQLSFKNMCKLKPLLNKWLEEADSSTGSPTSIDKIAAQGRKRKKRTSIEVSVKGALESHFLKCPKPSAQEITNLADSLQLEKEVVRVWFCNRRQKEKRMTPPGIQQQTPDDVYSQVGTVSADTPPPHHGLQTSVQ</sequence>
<protein>
    <recommendedName>
        <fullName>POU domain, class 3, transcription factor 3</fullName>
    </recommendedName>
    <alternativeName>
        <fullName>Brain-specific homeobox/POU domain protein 1</fullName>
        <shortName>Brain-1</shortName>
        <shortName>Brn-1</shortName>
    </alternativeName>
</protein>
<reference key="1">
    <citation type="journal article" date="1997" name="J. Biol. Chem.">
        <title>Redundancy of class III POU proteins in the oligodendrocyte lineage.</title>
        <authorList>
            <person name="Schreiber J."/>
            <person name="Enderich J."/>
            <person name="Sock E."/>
            <person name="Schmidt C."/>
            <person name="Richter-Landsberg C."/>
            <person name="Wegner M."/>
        </authorList>
    </citation>
    <scope>NUCLEOTIDE SEQUENCE [MRNA]</scope>
</reference>
<reference key="2">
    <citation type="journal article" date="1992" name="Proc. Natl. Acad. Sci. U.S.A.">
        <title>RHS2, a POU domain-containing gene, and its expression in developing and adult rat.</title>
        <authorList>
            <person name="le Moine C."/>
            <person name="Young W.S."/>
        </authorList>
    </citation>
    <scope>NUCLEOTIDE SEQUENCE [MRNA] OF 325-449</scope>
    <source>
        <tissue>Hypothalamus</tissue>
    </source>
</reference>
<reference key="3">
    <citation type="journal article" date="1998" name="J. Biol. Chem.">
        <title>Cooperative function of POU proteins and SOX proteins in glial cells.</title>
        <authorList>
            <person name="Kuhlbrodt K."/>
            <person name="Herbarth B."/>
            <person name="Sock E."/>
            <person name="Enderich J."/>
            <person name="Hermans-Borgmeyer I."/>
            <person name="Wegner M."/>
        </authorList>
    </citation>
    <scope>FUNCTION</scope>
    <scope>SUBCELLULAR LOCATION</scope>
    <scope>MUTAGENESIS OF 450-TRP-PHE-451</scope>
</reference>
<keyword id="KW-0217">Developmental protein</keyword>
<keyword id="KW-0238">DNA-binding</keyword>
<keyword id="KW-0371">Homeobox</keyword>
<keyword id="KW-0524">Neurogenesis</keyword>
<keyword id="KW-0539">Nucleus</keyword>
<keyword id="KW-1185">Reference proteome</keyword>
<keyword id="KW-0804">Transcription</keyword>
<keyword id="KW-0805">Transcription regulation</keyword>
<gene>
    <name type="primary">Pou3f3</name>
    <name type="synonym">Brn-1</name>
    <name type="synonym">Brn1</name>
    <name type="synonym">Rhs2</name>
</gene>
<accession>Q63262</accession>
<comment type="function">
    <text evidence="2 6">Transcription factor that acts synergistically with SOX11 and SOX4. Plays a role in neuronal development. Is implicated in an enhancer activity at the embryonic met-mesencephalic junction; the enhancer element contains the octamer motif (5'-ATTTGCAT-3') (By similarity).</text>
</comment>
<comment type="subunit">
    <text evidence="1">Homodimer.</text>
</comment>
<comment type="subcellular location">
    <subcellularLocation>
        <location evidence="3 4 6">Nucleus</location>
    </subcellularLocation>
</comment>
<comment type="tissue specificity">
    <text>Brain.</text>
</comment>
<comment type="developmental stage">
    <text>Expressed from embryonic day 11.5 into adulthood.</text>
</comment>
<comment type="similarity">
    <text evidence="7">Belongs to the POU transcription factor family. Class-3 subfamily.</text>
</comment>